<protein>
    <recommendedName>
        <fullName>DNA gyrase subunit B</fullName>
        <ecNumber evidence="2">5.6.2.2</ecNumber>
    </recommendedName>
</protein>
<reference key="1">
    <citation type="journal article" date="1999" name="Int. J. Syst. Bacteriol.">
        <title>Phylogenetic structures of the genus Acinetobacter based on gyrB sequences: comparison with the grouping by DNA-DNA hybridization.</title>
        <authorList>
            <person name="Yamamoto S."/>
            <person name="Bouvet P.J.M."/>
            <person name="Harayama S."/>
        </authorList>
    </citation>
    <scope>NUCLEOTIDE SEQUENCE [GENOMIC DNA]</scope>
    <source>
        <strain>ATCC 11171 / DSM 590 / CCUG 2491 / LMG 988 / NCIMB 8250 / CIP 63.46 / B94</strain>
    </source>
</reference>
<reference key="2">
    <citation type="journal article" date="1996" name="Int. J. Syst. Bacteriol.">
        <title>Phylogenetic analysis of Acinetobacter strains based on the nucleotide sequences of gyrB genes and on the amino acid sequences of their products.</title>
        <authorList>
            <person name="Yamamoto S."/>
            <person name="Harayama S."/>
        </authorList>
    </citation>
    <scope>NUCLEOTIDE SEQUENCE [GENOMIC DNA] OF 3-118 AND 289-388</scope>
    <source>
        <strain>ATCC 11171 / DSM 590 / CCUG 2491 / LMG 988 / NCIMB 8250 / CIP 63.46 / B94</strain>
    </source>
</reference>
<dbReference type="EC" id="5.6.2.2" evidence="2"/>
<dbReference type="EMBL" id="AB008690">
    <property type="protein sequence ID" value="BAA75407.1"/>
    <property type="molecule type" value="Genomic_DNA"/>
</dbReference>
<dbReference type="EMBL" id="D73437">
    <property type="protein sequence ID" value="BAA11162.1"/>
    <property type="molecule type" value="Genomic_DNA"/>
</dbReference>
<dbReference type="EMBL" id="D73422">
    <property type="protein sequence ID" value="BAA11147.1"/>
    <property type="molecule type" value="Genomic_DNA"/>
</dbReference>
<dbReference type="SMR" id="Q44274"/>
<dbReference type="STRING" id="106649.GCA_000829655_00585"/>
<dbReference type="GO" id="GO:0005737">
    <property type="term" value="C:cytoplasm"/>
    <property type="evidence" value="ECO:0007669"/>
    <property type="project" value="UniProtKB-SubCell"/>
</dbReference>
<dbReference type="GO" id="GO:0005524">
    <property type="term" value="F:ATP binding"/>
    <property type="evidence" value="ECO:0007669"/>
    <property type="project" value="UniProtKB-KW"/>
</dbReference>
<dbReference type="GO" id="GO:0003677">
    <property type="term" value="F:DNA binding"/>
    <property type="evidence" value="ECO:0007669"/>
    <property type="project" value="UniProtKB-KW"/>
</dbReference>
<dbReference type="GO" id="GO:0003918">
    <property type="term" value="F:DNA topoisomerase type II (double strand cut, ATP-hydrolyzing) activity"/>
    <property type="evidence" value="ECO:0007669"/>
    <property type="project" value="UniProtKB-EC"/>
</dbReference>
<dbReference type="GO" id="GO:0006265">
    <property type="term" value="P:DNA topological change"/>
    <property type="evidence" value="ECO:0007669"/>
    <property type="project" value="InterPro"/>
</dbReference>
<dbReference type="CDD" id="cd00822">
    <property type="entry name" value="TopoII_Trans_DNA_gyrase"/>
    <property type="match status" value="1"/>
</dbReference>
<dbReference type="FunFam" id="3.30.230.10:FF:000005">
    <property type="entry name" value="DNA gyrase subunit B"/>
    <property type="match status" value="1"/>
</dbReference>
<dbReference type="Gene3D" id="3.30.230.10">
    <property type="match status" value="1"/>
</dbReference>
<dbReference type="Gene3D" id="3.40.50.670">
    <property type="match status" value="1"/>
</dbReference>
<dbReference type="Gene3D" id="3.30.565.10">
    <property type="entry name" value="Histidine kinase-like ATPase, C-terminal domain"/>
    <property type="match status" value="1"/>
</dbReference>
<dbReference type="InterPro" id="IPR036890">
    <property type="entry name" value="HATPase_C_sf"/>
</dbReference>
<dbReference type="InterPro" id="IPR020568">
    <property type="entry name" value="Ribosomal_Su5_D2-typ_SF"/>
</dbReference>
<dbReference type="InterPro" id="IPR014721">
    <property type="entry name" value="Ribsml_uS5_D2-typ_fold_subgr"/>
</dbReference>
<dbReference type="InterPro" id="IPR001241">
    <property type="entry name" value="Topo_IIA"/>
</dbReference>
<dbReference type="InterPro" id="IPR013760">
    <property type="entry name" value="Topo_IIA-like_dom_sf"/>
</dbReference>
<dbReference type="InterPro" id="IPR000565">
    <property type="entry name" value="Topo_IIA_B"/>
</dbReference>
<dbReference type="InterPro" id="IPR013759">
    <property type="entry name" value="Topo_IIA_B_C"/>
</dbReference>
<dbReference type="InterPro" id="IPR013506">
    <property type="entry name" value="Topo_IIA_bsu_dom2"/>
</dbReference>
<dbReference type="InterPro" id="IPR018522">
    <property type="entry name" value="TopoIIA_CS"/>
</dbReference>
<dbReference type="InterPro" id="IPR006171">
    <property type="entry name" value="TOPRIM_dom"/>
</dbReference>
<dbReference type="PANTHER" id="PTHR45866:SF1">
    <property type="entry name" value="DNA GYRASE SUBUNIT B, MITOCHONDRIAL"/>
    <property type="match status" value="1"/>
</dbReference>
<dbReference type="PANTHER" id="PTHR45866">
    <property type="entry name" value="DNA GYRASE/TOPOISOMERASE SUBUNIT B"/>
    <property type="match status" value="1"/>
</dbReference>
<dbReference type="Pfam" id="PF00204">
    <property type="entry name" value="DNA_gyraseB"/>
    <property type="match status" value="1"/>
</dbReference>
<dbReference type="Pfam" id="PF01751">
    <property type="entry name" value="Toprim"/>
    <property type="match status" value="1"/>
</dbReference>
<dbReference type="PRINTS" id="PR01159">
    <property type="entry name" value="DNAGYRASEB"/>
</dbReference>
<dbReference type="PRINTS" id="PR00418">
    <property type="entry name" value="TPI2FAMILY"/>
</dbReference>
<dbReference type="SMART" id="SM00433">
    <property type="entry name" value="TOP2c"/>
    <property type="match status" value="1"/>
</dbReference>
<dbReference type="SUPFAM" id="SSF55874">
    <property type="entry name" value="ATPase domain of HSP90 chaperone/DNA topoisomerase II/histidine kinase"/>
    <property type="match status" value="1"/>
</dbReference>
<dbReference type="SUPFAM" id="SSF54211">
    <property type="entry name" value="Ribosomal protein S5 domain 2-like"/>
    <property type="match status" value="1"/>
</dbReference>
<dbReference type="SUPFAM" id="SSF56719">
    <property type="entry name" value="Type II DNA topoisomerase"/>
    <property type="match status" value="1"/>
</dbReference>
<dbReference type="PROSITE" id="PS00177">
    <property type="entry name" value="TOPOISOMERASE_II"/>
    <property type="match status" value="1"/>
</dbReference>
<dbReference type="PROSITE" id="PS50880">
    <property type="entry name" value="TOPRIM"/>
    <property type="match status" value="1"/>
</dbReference>
<name>GYRB_ACIGI</name>
<keyword id="KW-0067">ATP-binding</keyword>
<keyword id="KW-0963">Cytoplasm</keyword>
<keyword id="KW-0238">DNA-binding</keyword>
<keyword id="KW-0413">Isomerase</keyword>
<keyword id="KW-0547">Nucleotide-binding</keyword>
<keyword id="KW-0799">Topoisomerase</keyword>
<accession>Q44274</accession>
<accession>Q60168</accession>
<accession>Q9ZA04</accession>
<feature type="chain" id="PRO_0000145284" description="DNA gyrase subunit B">
    <location>
        <begin position="1" status="less than"/>
        <end position="389" status="greater than"/>
    </location>
</feature>
<feature type="domain" description="Toprim" evidence="2">
    <location>
        <begin position="312"/>
        <end position="389" status="greater than"/>
    </location>
</feature>
<feature type="site" description="Interaction with DNA" evidence="2">
    <location>
        <position position="343"/>
    </location>
</feature>
<feature type="site" description="Interaction with DNA" evidence="2">
    <location>
        <position position="346"/>
    </location>
</feature>
<feature type="non-terminal residue">
    <location>
        <position position="1"/>
    </location>
</feature>
<feature type="non-terminal residue">
    <location>
        <position position="389"/>
    </location>
</feature>
<comment type="function">
    <text evidence="1">A type II topoisomerase that negatively supercoils closed circular double-stranded (ds) DNA in an ATP-dependent manner to modulate DNA topology and maintain chromosomes in an underwound state. Negative supercoiling favors strand separation, and DNA replication, transcription, recombination and repair, all of which involve strand separation. Also able to catalyze the interconversion of other topological isomers of dsDNA rings, including catenanes and knotted rings. Type II topoisomerases break and join 2 DNA strands simultaneously in an ATP-dependent manner.</text>
</comment>
<comment type="catalytic activity">
    <reaction evidence="2">
        <text>ATP-dependent breakage, passage and rejoining of double-stranded DNA.</text>
        <dbReference type="EC" id="5.6.2.2"/>
    </reaction>
</comment>
<comment type="subunit">
    <text evidence="1">Heterotetramer, composed of two GyrA and two GyrB chains. In the heterotetramer, GyrA contains the active site tyrosine that forms a transient covalent intermediate with DNA, while GyrB binds cofactors and catalyzes ATP hydrolysis.</text>
</comment>
<comment type="subcellular location">
    <subcellularLocation>
        <location evidence="1">Cytoplasm</location>
    </subcellularLocation>
</comment>
<comment type="miscellaneous">
    <text evidence="1">Few gyrases are as efficient as E.coli at forming negative supercoils. Not all organisms have 2 type II topoisomerases; in organisms with a single type II topoisomerase this enzyme also has to decatenate newly replicated chromosomes.</text>
</comment>
<comment type="similarity">
    <text evidence="3">Belongs to the type II topoisomerase GyrB family.</text>
</comment>
<organism>
    <name type="scientific">Acinetobacter guillouiae</name>
    <name type="common">Acinetobacter genomosp. 11</name>
    <dbReference type="NCBI Taxonomy" id="106649"/>
    <lineage>
        <taxon>Bacteria</taxon>
        <taxon>Pseudomonadati</taxon>
        <taxon>Pseudomonadota</taxon>
        <taxon>Gammaproteobacteria</taxon>
        <taxon>Moraxellales</taxon>
        <taxon>Moraxellaceae</taxon>
        <taxon>Acinetobacter</taxon>
    </lineage>
</organism>
<evidence type="ECO:0000250" key="1">
    <source>
        <dbReference type="UniProtKB" id="P0AES6"/>
    </source>
</evidence>
<evidence type="ECO:0000255" key="2">
    <source>
        <dbReference type="PROSITE-ProRule" id="PRU00995"/>
    </source>
</evidence>
<evidence type="ECO:0000305" key="3"/>
<proteinExistence type="inferred from homology"/>
<sequence length="389" mass="43035">DNSYKVSGGLHGVGVSVVNALSSKLELTIHRAGHIHQQEYKHGDPVYPLKIVGDVETTGTIVRFWPSTETFSQTIFNVDILARRLRELSFLNAGVRIVLRDERVALEHVFDYEGGLSEFVKYINQGKTHLNEIFHFTTQAENGIGVEVALQWNDTYQENVRCFTNNIPQKDGGTHLAGFRAALTRGLNSYMENENLLKKEKVAVTGDDAREGLTAIVSVKVPDPKFSSQTKEKLVSSEVKPAVEQAMNKAFSEYLLENPQAAKSIAGKIIDAARARDAARKAREMTRRKSALDIAGLPGKLADCQEKDPALSELYLVEGDSAGGSAKQGRNRKMQAILPLKGKILNVERARFDKMISSQEVGTLITALGCGIGREEYNPDKLRYHKIII</sequence>
<gene>
    <name type="primary">gyrB</name>
</gene>